<organism>
    <name type="scientific">Macaca mulatta</name>
    <name type="common">Rhesus macaque</name>
    <dbReference type="NCBI Taxonomy" id="9544"/>
    <lineage>
        <taxon>Eukaryota</taxon>
        <taxon>Metazoa</taxon>
        <taxon>Chordata</taxon>
        <taxon>Craniata</taxon>
        <taxon>Vertebrata</taxon>
        <taxon>Euteleostomi</taxon>
        <taxon>Mammalia</taxon>
        <taxon>Eutheria</taxon>
        <taxon>Euarchontoglires</taxon>
        <taxon>Primates</taxon>
        <taxon>Haplorrhini</taxon>
        <taxon>Catarrhini</taxon>
        <taxon>Cercopithecidae</taxon>
        <taxon>Cercopithecinae</taxon>
        <taxon>Macaca</taxon>
    </lineage>
</organism>
<gene>
    <name type="primary">FPR2</name>
    <name type="synonym">FPRL1</name>
</gene>
<dbReference type="EMBL" id="X97737">
    <property type="protein sequence ID" value="CAA66321.1"/>
    <property type="molecule type" value="Genomic_DNA"/>
</dbReference>
<dbReference type="SMR" id="P79190"/>
<dbReference type="STRING" id="9544.ENSMMUP00000008083"/>
<dbReference type="GlyCosmos" id="P79190">
    <property type="glycosylation" value="1 site, No reported glycans"/>
</dbReference>
<dbReference type="PaxDb" id="9544-ENSMMUP00000008083"/>
<dbReference type="eggNOG" id="KOG3656">
    <property type="taxonomic scope" value="Eukaryota"/>
</dbReference>
<dbReference type="InParanoid" id="P79190"/>
<dbReference type="Proteomes" id="UP000006718">
    <property type="component" value="Unassembled WGS sequence"/>
</dbReference>
<dbReference type="GO" id="GO:0005886">
    <property type="term" value="C:plasma membrane"/>
    <property type="evidence" value="ECO:0000318"/>
    <property type="project" value="GO_Central"/>
</dbReference>
<dbReference type="GO" id="GO:0004875">
    <property type="term" value="F:complement receptor activity"/>
    <property type="evidence" value="ECO:0000318"/>
    <property type="project" value="GO_Central"/>
</dbReference>
<dbReference type="GO" id="GO:0004982">
    <property type="term" value="F:N-formyl peptide receptor activity"/>
    <property type="evidence" value="ECO:0000318"/>
    <property type="project" value="GO_Central"/>
</dbReference>
<dbReference type="GO" id="GO:0006935">
    <property type="term" value="P:chemotaxis"/>
    <property type="evidence" value="ECO:0007669"/>
    <property type="project" value="UniProtKB-KW"/>
</dbReference>
<dbReference type="GO" id="GO:0002430">
    <property type="term" value="P:complement receptor mediated signaling pathway"/>
    <property type="evidence" value="ECO:0000318"/>
    <property type="project" value="GO_Central"/>
</dbReference>
<dbReference type="GO" id="GO:0006954">
    <property type="term" value="P:inflammatory response"/>
    <property type="evidence" value="ECO:0000318"/>
    <property type="project" value="GO_Central"/>
</dbReference>
<dbReference type="GO" id="GO:0007200">
    <property type="term" value="P:phospholipase C-activating G protein-coupled receptor signaling pathway"/>
    <property type="evidence" value="ECO:0000318"/>
    <property type="project" value="GO_Central"/>
</dbReference>
<dbReference type="GO" id="GO:0007204">
    <property type="term" value="P:positive regulation of cytosolic calcium ion concentration"/>
    <property type="evidence" value="ECO:0000318"/>
    <property type="project" value="GO_Central"/>
</dbReference>
<dbReference type="CDD" id="cd15117">
    <property type="entry name" value="7tmA_FPR-like"/>
    <property type="match status" value="1"/>
</dbReference>
<dbReference type="FunFam" id="1.20.1070.10:FF:000034">
    <property type="entry name" value="G-protein coupled receptor 1"/>
    <property type="match status" value="1"/>
</dbReference>
<dbReference type="Gene3D" id="1.20.1070.10">
    <property type="entry name" value="Rhodopsin 7-helix transmembrane proteins"/>
    <property type="match status" value="1"/>
</dbReference>
<dbReference type="InterPro" id="IPR000826">
    <property type="entry name" value="Formyl_rcpt-rel"/>
</dbReference>
<dbReference type="InterPro" id="IPR000276">
    <property type="entry name" value="GPCR_Rhodpsn"/>
</dbReference>
<dbReference type="InterPro" id="IPR017452">
    <property type="entry name" value="GPCR_Rhodpsn_7TM"/>
</dbReference>
<dbReference type="PANTHER" id="PTHR24225">
    <property type="entry name" value="CHEMOTACTIC RECEPTOR"/>
    <property type="match status" value="1"/>
</dbReference>
<dbReference type="PANTHER" id="PTHR24225:SF0">
    <property type="entry name" value="N-FORMYL PEPTIDE RECEPTOR 2"/>
    <property type="match status" value="1"/>
</dbReference>
<dbReference type="Pfam" id="PF00001">
    <property type="entry name" value="7tm_1"/>
    <property type="match status" value="1"/>
</dbReference>
<dbReference type="PRINTS" id="PR00526">
    <property type="entry name" value="FMETLEUPHER"/>
</dbReference>
<dbReference type="PRINTS" id="PR00237">
    <property type="entry name" value="GPCRRHODOPSN"/>
</dbReference>
<dbReference type="SUPFAM" id="SSF81321">
    <property type="entry name" value="Family A G protein-coupled receptor-like"/>
    <property type="match status" value="1"/>
</dbReference>
<dbReference type="PROSITE" id="PS00237">
    <property type="entry name" value="G_PROTEIN_RECEP_F1_1"/>
    <property type="match status" value="1"/>
</dbReference>
<dbReference type="PROSITE" id="PS50262">
    <property type="entry name" value="G_PROTEIN_RECEP_F1_2"/>
    <property type="match status" value="1"/>
</dbReference>
<sequence length="348" mass="38457">NFSTPLSEYEEVSYESAGYTVLQILPLVVLGVTFVLGVLGNGLVIWVAGFRMTRTVTTICYLNLALADFSFTATLPFLIVSMAMGEKWPFGWFLCKLIHIVVDINLFGSVFLIGFIALDRCICVLHPVWAQNHRTVSLAMKVIVGPWILALVLTLPVFLFLTTVTIPNGDTYCTFNFASWGGTPEKRLKVAITMLTARGIIRFVIGFSMPMSIVATCYGLIAAKIHKKGMIKSSRPLRVLTAVVASFFICWFPFQLVALLSTVWLKEILVDGKYKIINILVNPTSSLAFFNSCLNPMLYVFVGQDFRERLIHSLPTSLERALSEDSAPTNDTAASCASPPAETELQAM</sequence>
<name>FPR2_MACMU</name>
<proteinExistence type="inferred from homology"/>
<comment type="function">
    <text evidence="1 2">Low affinity receptor for N-formyl-methionyl peptides, which are powerful neutrophil chemotactic factors (By similarity). Binding of FMLP to the receptor causes activation of neutrophils (By similarity). This response is mediated via a G-protein that activates a phosphatidylinositol-calcium second messenger system (By similarity). Receptor for the chemokine-like protein FAM19A5, mediating FAM19A5-stimulated macrophage chemotaxis and the inhibitory effect on TNFSF11/RANKL-induced osteoclast differentiation (By similarity).</text>
</comment>
<comment type="subunit">
    <text evidence="2">Interacts with APP; the interaction takes place at the cell surface and the complex is then rapidly internalized.</text>
</comment>
<comment type="subcellular location">
    <subcellularLocation>
        <location evidence="2">Cell membrane</location>
        <topology evidence="2">Multi-pass membrane protein</topology>
    </subcellularLocation>
    <text evidence="2">Associates with APP at the cell surface and the complex is then rapidly internalized.</text>
</comment>
<comment type="similarity">
    <text evidence="4">Belongs to the G-protein coupled receptor 1 family.</text>
</comment>
<accession>P79190</accession>
<keyword id="KW-1003">Cell membrane</keyword>
<keyword id="KW-0145">Chemotaxis</keyword>
<keyword id="KW-1015">Disulfide bond</keyword>
<keyword id="KW-0297">G-protein coupled receptor</keyword>
<keyword id="KW-0325">Glycoprotein</keyword>
<keyword id="KW-0472">Membrane</keyword>
<keyword id="KW-0675">Receptor</keyword>
<keyword id="KW-1185">Reference proteome</keyword>
<keyword id="KW-0807">Transducer</keyword>
<keyword id="KW-0812">Transmembrane</keyword>
<keyword id="KW-1133">Transmembrane helix</keyword>
<evidence type="ECO:0000250" key="1">
    <source>
        <dbReference type="UniProtKB" id="O88536"/>
    </source>
</evidence>
<evidence type="ECO:0000250" key="2">
    <source>
        <dbReference type="UniProtKB" id="P25090"/>
    </source>
</evidence>
<evidence type="ECO:0000255" key="3"/>
<evidence type="ECO:0000255" key="4">
    <source>
        <dbReference type="PROSITE-ProRule" id="PRU00521"/>
    </source>
</evidence>
<evidence type="ECO:0000256" key="5">
    <source>
        <dbReference type="SAM" id="MobiDB-lite"/>
    </source>
</evidence>
<feature type="chain" id="PRO_0000069452" description="N-formyl peptide receptor 2">
    <location>
        <begin position="1" status="less than"/>
        <end position="348" status="greater than"/>
    </location>
</feature>
<feature type="topological domain" description="Extracellular" evidence="3">
    <location>
        <begin position="1" status="less than"/>
        <end position="24"/>
    </location>
</feature>
<feature type="transmembrane region" description="Helical; Name=1" evidence="3">
    <location>
        <begin position="25"/>
        <end position="47"/>
    </location>
</feature>
<feature type="topological domain" description="Cytoplasmic" evidence="3">
    <location>
        <begin position="48"/>
        <end position="58"/>
    </location>
</feature>
<feature type="transmembrane region" description="Helical; Name=2" evidence="3">
    <location>
        <begin position="59"/>
        <end position="80"/>
    </location>
</feature>
<feature type="topological domain" description="Extracellular" evidence="3">
    <location>
        <begin position="81"/>
        <end position="97"/>
    </location>
</feature>
<feature type="transmembrane region" description="Helical; Name=3" evidence="3">
    <location>
        <begin position="98"/>
        <end position="118"/>
    </location>
</feature>
<feature type="topological domain" description="Cytoplasmic" evidence="3">
    <location>
        <begin position="119"/>
        <end position="137"/>
    </location>
</feature>
<feature type="transmembrane region" description="Helical; Name=4" evidence="3">
    <location>
        <begin position="138"/>
        <end position="159"/>
    </location>
</feature>
<feature type="topological domain" description="Extracellular" evidence="3">
    <location>
        <begin position="160"/>
        <end position="202"/>
    </location>
</feature>
<feature type="transmembrane region" description="Helical; Name=5" evidence="3">
    <location>
        <begin position="203"/>
        <end position="223"/>
    </location>
</feature>
<feature type="topological domain" description="Cytoplasmic" evidence="3">
    <location>
        <begin position="224"/>
        <end position="239"/>
    </location>
</feature>
<feature type="transmembrane region" description="Helical; Name=6" evidence="3">
    <location>
        <begin position="240"/>
        <end position="263"/>
    </location>
</feature>
<feature type="topological domain" description="Extracellular" evidence="3">
    <location>
        <begin position="264"/>
        <end position="283"/>
    </location>
</feature>
<feature type="transmembrane region" description="Helical; Name=7" evidence="3">
    <location>
        <begin position="284"/>
        <end position="303"/>
    </location>
</feature>
<feature type="topological domain" description="Cytoplasmic" evidence="3">
    <location>
        <begin position="304"/>
        <end position="348"/>
    </location>
</feature>
<feature type="region of interest" description="Disordered" evidence="5">
    <location>
        <begin position="322"/>
        <end position="348"/>
    </location>
</feature>
<feature type="compositionally biased region" description="Polar residues" evidence="5">
    <location>
        <begin position="326"/>
        <end position="335"/>
    </location>
</feature>
<feature type="glycosylation site" description="N-linked (GlcNAc...) asparagine" evidence="3">
    <location>
        <position position="1"/>
    </location>
</feature>
<feature type="disulfide bond" evidence="4">
    <location>
        <begin position="95"/>
        <end position="173"/>
    </location>
</feature>
<feature type="non-terminal residue">
    <location>
        <position position="1"/>
    </location>
</feature>
<feature type="non-terminal residue">
    <location>
        <position position="348"/>
    </location>
</feature>
<reference key="1">
    <citation type="journal article" date="1996" name="Immunogenetics">
        <title>Molecular evolution of the N-formyl peptide and C5a receptors in non-human primates.</title>
        <authorList>
            <person name="Alvarez V."/>
            <person name="Coto E."/>
            <person name="Sehen F."/>
            <person name="Gouzalek-Koces S."/>
            <person name="Lopez-Larrea C."/>
        </authorList>
    </citation>
    <scope>NUCLEOTIDE SEQUENCE [GENOMIC DNA]</scope>
</reference>
<protein>
    <recommendedName>
        <fullName>N-formyl peptide receptor 2</fullName>
    </recommendedName>
    <alternativeName>
        <fullName>FMLP-related receptor I</fullName>
        <shortName>FMLP-R-I</shortName>
    </alternativeName>
    <alternativeName>
        <fullName>Formyl peptide receptor-like 1</fullName>
    </alternativeName>
</protein>